<keyword id="KW-0002">3D-structure</keyword>
<keyword id="KW-0328">Glycosyltransferase</keyword>
<keyword id="KW-0479">Metal-binding</keyword>
<keyword id="KW-0630">Potassium</keyword>
<keyword id="KW-1185">Reference proteome</keyword>
<keyword id="KW-0808">Transferase</keyword>
<dbReference type="EC" id="2.4.2.2" evidence="2"/>
<dbReference type="EMBL" id="X82174">
    <property type="protein sequence ID" value="CAA57664.1"/>
    <property type="molecule type" value="Genomic_DNA"/>
</dbReference>
<dbReference type="EMBL" id="D45912">
    <property type="protein sequence ID" value="BAA08339.1"/>
    <property type="molecule type" value="Genomic_DNA"/>
</dbReference>
<dbReference type="EMBL" id="AL009126">
    <property type="protein sequence ID" value="CAB15976.2"/>
    <property type="molecule type" value="Genomic_DNA"/>
</dbReference>
<dbReference type="PIR" id="S78770">
    <property type="entry name" value="S49457"/>
</dbReference>
<dbReference type="RefSeq" id="NP_391819.2">
    <property type="nucleotide sequence ID" value="NC_000964.3"/>
</dbReference>
<dbReference type="RefSeq" id="WP_003243952.1">
    <property type="nucleotide sequence ID" value="NZ_OZ025638.1"/>
</dbReference>
<dbReference type="PDB" id="5EP8">
    <property type="method" value="X-ray"/>
    <property type="resolution" value="2.66 A"/>
    <property type="chains" value="A/B=1-433"/>
</dbReference>
<dbReference type="PDB" id="5OLN">
    <property type="method" value="X-ray"/>
    <property type="resolution" value="1.88 A"/>
    <property type="chains" value="A/B=1-433"/>
</dbReference>
<dbReference type="PDBsum" id="5EP8"/>
<dbReference type="PDBsum" id="5OLN"/>
<dbReference type="SMR" id="P39142"/>
<dbReference type="FunCoup" id="P39142">
    <property type="interactions" value="128"/>
</dbReference>
<dbReference type="IntAct" id="P39142">
    <property type="interactions" value="1"/>
</dbReference>
<dbReference type="STRING" id="224308.BSU39400"/>
<dbReference type="jPOST" id="P39142"/>
<dbReference type="PaxDb" id="224308-BSU39400"/>
<dbReference type="EnsemblBacteria" id="CAB15976">
    <property type="protein sequence ID" value="CAB15976"/>
    <property type="gene ID" value="BSU_39400"/>
</dbReference>
<dbReference type="GeneID" id="937540"/>
<dbReference type="KEGG" id="bsu:BSU39400"/>
<dbReference type="PATRIC" id="fig|224308.179.peg.4265"/>
<dbReference type="eggNOG" id="COG0213">
    <property type="taxonomic scope" value="Bacteria"/>
</dbReference>
<dbReference type="InParanoid" id="P39142"/>
<dbReference type="OrthoDB" id="9763887at2"/>
<dbReference type="PhylomeDB" id="P39142"/>
<dbReference type="BioCyc" id="BSUB:BSU39400-MONOMER"/>
<dbReference type="BRENDA" id="2.4.2.2">
    <property type="organism ID" value="658"/>
</dbReference>
<dbReference type="Proteomes" id="UP000001570">
    <property type="component" value="Chromosome"/>
</dbReference>
<dbReference type="GO" id="GO:0005829">
    <property type="term" value="C:cytosol"/>
    <property type="evidence" value="ECO:0000318"/>
    <property type="project" value="GO_Central"/>
</dbReference>
<dbReference type="GO" id="GO:0004645">
    <property type="term" value="F:1,4-alpha-oligoglucan phosphorylase activity"/>
    <property type="evidence" value="ECO:0007669"/>
    <property type="project" value="InterPro"/>
</dbReference>
<dbReference type="GO" id="GO:0047847">
    <property type="term" value="F:deoxyuridine phosphorylase activity"/>
    <property type="evidence" value="ECO:0007669"/>
    <property type="project" value="RHEA"/>
</dbReference>
<dbReference type="GO" id="GO:0046872">
    <property type="term" value="F:metal ion binding"/>
    <property type="evidence" value="ECO:0007669"/>
    <property type="project" value="UniProtKB-KW"/>
</dbReference>
<dbReference type="GO" id="GO:0009032">
    <property type="term" value="F:thymidine phosphorylase activity"/>
    <property type="evidence" value="ECO:0000318"/>
    <property type="project" value="GO_Central"/>
</dbReference>
<dbReference type="GO" id="GO:0004850">
    <property type="term" value="F:uridine phosphorylase activity"/>
    <property type="evidence" value="ECO:0007669"/>
    <property type="project" value="RHEA"/>
</dbReference>
<dbReference type="GO" id="GO:0006206">
    <property type="term" value="P:pyrimidine nucleobase metabolic process"/>
    <property type="evidence" value="ECO:0007669"/>
    <property type="project" value="InterPro"/>
</dbReference>
<dbReference type="GO" id="GO:0006213">
    <property type="term" value="P:pyrimidine nucleoside metabolic process"/>
    <property type="evidence" value="ECO:0007669"/>
    <property type="project" value="InterPro"/>
</dbReference>
<dbReference type="FunFam" id="1.20.970.10:FF:000002">
    <property type="entry name" value="Pyrimidine-nucleoside phosphorylase"/>
    <property type="match status" value="1"/>
</dbReference>
<dbReference type="FunFam" id="3.40.1030.10:FF:000003">
    <property type="entry name" value="Pyrimidine-nucleoside phosphorylase"/>
    <property type="match status" value="1"/>
</dbReference>
<dbReference type="FunFam" id="3.90.1170.30:FF:000002">
    <property type="entry name" value="Pyrimidine-nucleoside phosphorylase"/>
    <property type="match status" value="1"/>
</dbReference>
<dbReference type="Gene3D" id="3.40.1030.10">
    <property type="entry name" value="Nucleoside phosphorylase/phosphoribosyltransferase catalytic domain"/>
    <property type="match status" value="1"/>
</dbReference>
<dbReference type="Gene3D" id="3.90.1170.30">
    <property type="entry name" value="Pyrimidine nucleoside phosphorylase-like, C-terminal domain"/>
    <property type="match status" value="1"/>
</dbReference>
<dbReference type="Gene3D" id="1.20.970.10">
    <property type="entry name" value="Transferase, Pyrimidine Nucleoside Phosphorylase, Chain C"/>
    <property type="match status" value="1"/>
</dbReference>
<dbReference type="InterPro" id="IPR000312">
    <property type="entry name" value="Glycosyl_Trfase_fam3"/>
</dbReference>
<dbReference type="InterPro" id="IPR017459">
    <property type="entry name" value="Glycosyl_Trfase_fam3_N_dom"/>
</dbReference>
<dbReference type="InterPro" id="IPR036320">
    <property type="entry name" value="Glycosyl_Trfase_fam3_N_dom_sf"/>
</dbReference>
<dbReference type="InterPro" id="IPR035902">
    <property type="entry name" value="Nuc_phospho_transferase"/>
</dbReference>
<dbReference type="InterPro" id="IPR036566">
    <property type="entry name" value="PYNP-like_C_sf"/>
</dbReference>
<dbReference type="InterPro" id="IPR013102">
    <property type="entry name" value="PYNP_C"/>
</dbReference>
<dbReference type="InterPro" id="IPR018090">
    <property type="entry name" value="Pyrmidine_PPas_bac/euk"/>
</dbReference>
<dbReference type="InterPro" id="IPR017872">
    <property type="entry name" value="Pyrmidine_PPase_CS"/>
</dbReference>
<dbReference type="InterPro" id="IPR000053">
    <property type="entry name" value="Thymidine/pyrmidine_PPase"/>
</dbReference>
<dbReference type="NCBIfam" id="NF004490">
    <property type="entry name" value="PRK05820.1"/>
    <property type="match status" value="1"/>
</dbReference>
<dbReference type="NCBIfam" id="NF004747">
    <property type="entry name" value="PRK06078.1"/>
    <property type="match status" value="1"/>
</dbReference>
<dbReference type="NCBIfam" id="TIGR02644">
    <property type="entry name" value="Y_phosphoryl"/>
    <property type="match status" value="1"/>
</dbReference>
<dbReference type="PANTHER" id="PTHR10515">
    <property type="entry name" value="THYMIDINE PHOSPHORYLASE"/>
    <property type="match status" value="1"/>
</dbReference>
<dbReference type="PANTHER" id="PTHR10515:SF0">
    <property type="entry name" value="THYMIDINE PHOSPHORYLASE"/>
    <property type="match status" value="1"/>
</dbReference>
<dbReference type="Pfam" id="PF02885">
    <property type="entry name" value="Glycos_trans_3N"/>
    <property type="match status" value="1"/>
</dbReference>
<dbReference type="Pfam" id="PF00591">
    <property type="entry name" value="Glycos_transf_3"/>
    <property type="match status" value="1"/>
</dbReference>
<dbReference type="Pfam" id="PF07831">
    <property type="entry name" value="PYNP_C"/>
    <property type="match status" value="1"/>
</dbReference>
<dbReference type="PIRSF" id="PIRSF000478">
    <property type="entry name" value="TP_PyNP"/>
    <property type="match status" value="1"/>
</dbReference>
<dbReference type="SMART" id="SM00941">
    <property type="entry name" value="PYNP_C"/>
    <property type="match status" value="1"/>
</dbReference>
<dbReference type="SUPFAM" id="SSF52418">
    <property type="entry name" value="Nucleoside phosphorylase/phosphoribosyltransferase catalytic domain"/>
    <property type="match status" value="1"/>
</dbReference>
<dbReference type="SUPFAM" id="SSF47648">
    <property type="entry name" value="Nucleoside phosphorylase/phosphoribosyltransferase N-terminal domain"/>
    <property type="match status" value="1"/>
</dbReference>
<dbReference type="SUPFAM" id="SSF54680">
    <property type="entry name" value="Pyrimidine nucleoside phosphorylase C-terminal domain"/>
    <property type="match status" value="1"/>
</dbReference>
<dbReference type="PROSITE" id="PS00647">
    <property type="entry name" value="THYMID_PHOSPHORYLASE"/>
    <property type="match status" value="1"/>
</dbReference>
<protein>
    <recommendedName>
        <fullName evidence="3">Pyrimidine-nucleoside phosphorylase</fullName>
        <shortName evidence="1">PYNP</shortName>
        <shortName evidence="1">Py-NPase</shortName>
        <ecNumber evidence="2">2.4.2.2</ecNumber>
    </recommendedName>
</protein>
<gene>
    <name evidence="3" type="primary">pdp</name>
    <name type="ordered locus">BSU39400</name>
</gene>
<reference key="1">
    <citation type="journal article" date="1996" name="J. Bacteriol.">
        <title>Dra-nupC-pdp operon of Bacillus subtilis: nucleotide sequence, induction by deoxyribonucleosides, and transcriptional regulation by the deoR-encoded DeoR repressor protein.</title>
        <authorList>
            <person name="Saxild H.H."/>
            <person name="Andersen L.N."/>
            <person name="Hammer K."/>
        </authorList>
    </citation>
    <scope>NUCLEOTIDE SEQUENCE [GENOMIC DNA]</scope>
    <scope>FUNCTION</scope>
    <scope>CATALYTIC ACTIVITY</scope>
    <scope>INDUCTION</scope>
    <source>
        <strain>168</strain>
    </source>
</reference>
<reference key="2">
    <citation type="journal article" date="1995" name="DNA Res.">
        <title>Cloning and sequencing of a 23-kb region of the Bacillus subtilis genome between the iol and hut operons.</title>
        <authorList>
            <person name="Yoshida K."/>
            <person name="Fujimyra M."/>
            <person name="Yanai N."/>
            <person name="Fujita Y."/>
        </authorList>
    </citation>
    <scope>NUCLEOTIDE SEQUENCE [GENOMIC DNA]</scope>
    <source>
        <strain>168 / BGSC1A1</strain>
    </source>
</reference>
<reference key="3">
    <citation type="journal article" date="1997" name="Nature">
        <title>The complete genome sequence of the Gram-positive bacterium Bacillus subtilis.</title>
        <authorList>
            <person name="Kunst F."/>
            <person name="Ogasawara N."/>
            <person name="Moszer I."/>
            <person name="Albertini A.M."/>
            <person name="Alloni G."/>
            <person name="Azevedo V."/>
            <person name="Bertero M.G."/>
            <person name="Bessieres P."/>
            <person name="Bolotin A."/>
            <person name="Borchert S."/>
            <person name="Borriss R."/>
            <person name="Boursier L."/>
            <person name="Brans A."/>
            <person name="Braun M."/>
            <person name="Brignell S.C."/>
            <person name="Bron S."/>
            <person name="Brouillet S."/>
            <person name="Bruschi C.V."/>
            <person name="Caldwell B."/>
            <person name="Capuano V."/>
            <person name="Carter N.M."/>
            <person name="Choi S.-K."/>
            <person name="Codani J.-J."/>
            <person name="Connerton I.F."/>
            <person name="Cummings N.J."/>
            <person name="Daniel R.A."/>
            <person name="Denizot F."/>
            <person name="Devine K.M."/>
            <person name="Duesterhoeft A."/>
            <person name="Ehrlich S.D."/>
            <person name="Emmerson P.T."/>
            <person name="Entian K.-D."/>
            <person name="Errington J."/>
            <person name="Fabret C."/>
            <person name="Ferrari E."/>
            <person name="Foulger D."/>
            <person name="Fritz C."/>
            <person name="Fujita M."/>
            <person name="Fujita Y."/>
            <person name="Fuma S."/>
            <person name="Galizzi A."/>
            <person name="Galleron N."/>
            <person name="Ghim S.-Y."/>
            <person name="Glaser P."/>
            <person name="Goffeau A."/>
            <person name="Golightly E.J."/>
            <person name="Grandi G."/>
            <person name="Guiseppi G."/>
            <person name="Guy B.J."/>
            <person name="Haga K."/>
            <person name="Haiech J."/>
            <person name="Harwood C.R."/>
            <person name="Henaut A."/>
            <person name="Hilbert H."/>
            <person name="Holsappel S."/>
            <person name="Hosono S."/>
            <person name="Hullo M.-F."/>
            <person name="Itaya M."/>
            <person name="Jones L.-M."/>
            <person name="Joris B."/>
            <person name="Karamata D."/>
            <person name="Kasahara Y."/>
            <person name="Klaerr-Blanchard M."/>
            <person name="Klein C."/>
            <person name="Kobayashi Y."/>
            <person name="Koetter P."/>
            <person name="Koningstein G."/>
            <person name="Krogh S."/>
            <person name="Kumano M."/>
            <person name="Kurita K."/>
            <person name="Lapidus A."/>
            <person name="Lardinois S."/>
            <person name="Lauber J."/>
            <person name="Lazarevic V."/>
            <person name="Lee S.-M."/>
            <person name="Levine A."/>
            <person name="Liu H."/>
            <person name="Masuda S."/>
            <person name="Mauel C."/>
            <person name="Medigue C."/>
            <person name="Medina N."/>
            <person name="Mellado R.P."/>
            <person name="Mizuno M."/>
            <person name="Moestl D."/>
            <person name="Nakai S."/>
            <person name="Noback M."/>
            <person name="Noone D."/>
            <person name="O'Reilly M."/>
            <person name="Ogawa K."/>
            <person name="Ogiwara A."/>
            <person name="Oudega B."/>
            <person name="Park S.-H."/>
            <person name="Parro V."/>
            <person name="Pohl T.M."/>
            <person name="Portetelle D."/>
            <person name="Porwollik S."/>
            <person name="Prescott A.M."/>
            <person name="Presecan E."/>
            <person name="Pujic P."/>
            <person name="Purnelle B."/>
            <person name="Rapoport G."/>
            <person name="Rey M."/>
            <person name="Reynolds S."/>
            <person name="Rieger M."/>
            <person name="Rivolta C."/>
            <person name="Rocha E."/>
            <person name="Roche B."/>
            <person name="Rose M."/>
            <person name="Sadaie Y."/>
            <person name="Sato T."/>
            <person name="Scanlan E."/>
            <person name="Schleich S."/>
            <person name="Schroeter R."/>
            <person name="Scoffone F."/>
            <person name="Sekiguchi J."/>
            <person name="Sekowska A."/>
            <person name="Seror S.J."/>
            <person name="Serror P."/>
            <person name="Shin B.-S."/>
            <person name="Soldo B."/>
            <person name="Sorokin A."/>
            <person name="Tacconi E."/>
            <person name="Takagi T."/>
            <person name="Takahashi H."/>
            <person name="Takemaru K."/>
            <person name="Takeuchi M."/>
            <person name="Tamakoshi A."/>
            <person name="Tanaka T."/>
            <person name="Terpstra P."/>
            <person name="Tognoni A."/>
            <person name="Tosato V."/>
            <person name="Uchiyama S."/>
            <person name="Vandenbol M."/>
            <person name="Vannier F."/>
            <person name="Vassarotti A."/>
            <person name="Viari A."/>
            <person name="Wambutt R."/>
            <person name="Wedler E."/>
            <person name="Wedler H."/>
            <person name="Weitzenegger T."/>
            <person name="Winters P."/>
            <person name="Wipat A."/>
            <person name="Yamamoto H."/>
            <person name="Yamane K."/>
            <person name="Yasumoto K."/>
            <person name="Yata K."/>
            <person name="Yoshida K."/>
            <person name="Yoshikawa H.-F."/>
            <person name="Zumstein E."/>
            <person name="Yoshikawa H."/>
            <person name="Danchin A."/>
        </authorList>
    </citation>
    <scope>NUCLEOTIDE SEQUENCE [LARGE SCALE GENOMIC DNA]</scope>
    <source>
        <strain>168</strain>
    </source>
</reference>
<reference key="4">
    <citation type="journal article" date="1999" name="Genome Res.">
        <title>Detecting and analyzing DNA sequencing errors: toward a higher quality of the Bacillus subtilis genome sequence.</title>
        <authorList>
            <person name="Medigue C."/>
            <person name="Rose M."/>
            <person name="Viari A."/>
            <person name="Danchin A."/>
        </authorList>
    </citation>
    <scope>SEQUENCE REVISION</scope>
</reference>
<name>PDP_BACSU</name>
<evidence type="ECO:0000250" key="1">
    <source>
        <dbReference type="UniProtKB" id="P77836"/>
    </source>
</evidence>
<evidence type="ECO:0000269" key="2">
    <source>
    </source>
</evidence>
<evidence type="ECO:0000303" key="3">
    <source>
    </source>
</evidence>
<evidence type="ECO:0000305" key="4"/>
<evidence type="ECO:0007829" key="5">
    <source>
        <dbReference type="PDB" id="5EP8"/>
    </source>
</evidence>
<evidence type="ECO:0007829" key="6">
    <source>
        <dbReference type="PDB" id="5OLN"/>
    </source>
</evidence>
<comment type="function">
    <text evidence="1 2">Catalyzes phosphorolysis of the pyrimidine nucleosides uridine, thymidine and 2'-deoxyuridine with the formation of the corresponding pyrimidine base and ribose-1-phosphate.</text>
</comment>
<comment type="catalytic activity">
    <reaction evidence="2">
        <text>uridine + phosphate = alpha-D-ribose 1-phosphate + uracil</text>
        <dbReference type="Rhea" id="RHEA:24388"/>
        <dbReference type="ChEBI" id="CHEBI:16704"/>
        <dbReference type="ChEBI" id="CHEBI:17568"/>
        <dbReference type="ChEBI" id="CHEBI:43474"/>
        <dbReference type="ChEBI" id="CHEBI:57720"/>
        <dbReference type="EC" id="2.4.2.2"/>
    </reaction>
</comment>
<comment type="catalytic activity">
    <reaction evidence="2">
        <text>thymidine + phosphate = 2-deoxy-alpha-D-ribose 1-phosphate + thymine</text>
        <dbReference type="Rhea" id="RHEA:16037"/>
        <dbReference type="ChEBI" id="CHEBI:17748"/>
        <dbReference type="ChEBI" id="CHEBI:17821"/>
        <dbReference type="ChEBI" id="CHEBI:43474"/>
        <dbReference type="ChEBI" id="CHEBI:57259"/>
        <dbReference type="EC" id="2.4.2.2"/>
    </reaction>
</comment>
<comment type="catalytic activity">
    <reaction evidence="1">
        <text>2'-deoxyuridine + phosphate = 2-deoxy-alpha-D-ribose 1-phosphate + uracil</text>
        <dbReference type="Rhea" id="RHEA:22824"/>
        <dbReference type="ChEBI" id="CHEBI:16450"/>
        <dbReference type="ChEBI" id="CHEBI:17568"/>
        <dbReference type="ChEBI" id="CHEBI:43474"/>
        <dbReference type="ChEBI" id="CHEBI:57259"/>
        <dbReference type="EC" id="2.4.2.2"/>
    </reaction>
</comment>
<comment type="cofactor">
    <cofactor evidence="1">
        <name>K(+)</name>
        <dbReference type="ChEBI" id="CHEBI:29103"/>
    </cofactor>
    <text evidence="1">Binds 1 K(+) ion per subunit.</text>
</comment>
<comment type="subunit">
    <text evidence="1">Homodimer.</text>
</comment>
<comment type="induction">
    <text evidence="2">Induced by deoxyadenosine and thymidine. Repressed by DeoR and glucose.</text>
</comment>
<comment type="similarity">
    <text evidence="4">Belongs to the thymidine/pyrimidine-nucleoside phosphorylase family.</text>
</comment>
<accession>P39142</accession>
<proteinExistence type="evidence at protein level"/>
<feature type="chain" id="PRO_0000059084" description="Pyrimidine-nucleoside phosphorylase">
    <location>
        <begin position="1"/>
        <end position="433"/>
    </location>
</feature>
<feature type="binding site" evidence="1">
    <location>
        <begin position="81"/>
        <end position="83"/>
    </location>
    <ligand>
        <name>phosphate</name>
        <dbReference type="ChEBI" id="CHEBI:43474"/>
    </ligand>
</feature>
<feature type="binding site" evidence="1">
    <location>
        <position position="88"/>
    </location>
    <ligand>
        <name>K(+)</name>
        <dbReference type="ChEBI" id="CHEBI:29103"/>
    </ligand>
</feature>
<feature type="binding site" evidence="1">
    <location>
        <position position="90"/>
    </location>
    <ligand>
        <name>K(+)</name>
        <dbReference type="ChEBI" id="CHEBI:29103"/>
    </ligand>
</feature>
<feature type="binding site" evidence="1">
    <location>
        <position position="92"/>
    </location>
    <ligand>
        <name>phosphate</name>
        <dbReference type="ChEBI" id="CHEBI:43474"/>
    </ligand>
</feature>
<feature type="binding site" evidence="1">
    <location>
        <begin position="108"/>
        <end position="110"/>
    </location>
    <ligand>
        <name>phosphate</name>
        <dbReference type="ChEBI" id="CHEBI:43474"/>
    </ligand>
</feature>
<feature type="binding site" evidence="1">
    <location>
        <position position="120"/>
    </location>
    <ligand>
        <name>phosphate</name>
        <dbReference type="ChEBI" id="CHEBI:43474"/>
    </ligand>
</feature>
<feature type="binding site" evidence="1">
    <location>
        <position position="168"/>
    </location>
    <ligand>
        <name>substrate</name>
    </ligand>
</feature>
<feature type="binding site" evidence="1">
    <location>
        <position position="187"/>
    </location>
    <ligand>
        <name>substrate</name>
    </ligand>
</feature>
<feature type="binding site" evidence="1">
    <location>
        <position position="243"/>
    </location>
    <ligand>
        <name>K(+)</name>
        <dbReference type="ChEBI" id="CHEBI:29103"/>
    </ligand>
</feature>
<feature type="binding site" evidence="1">
    <location>
        <position position="246"/>
    </location>
    <ligand>
        <name>K(+)</name>
        <dbReference type="ChEBI" id="CHEBI:29103"/>
    </ligand>
</feature>
<feature type="binding site" evidence="1">
    <location>
        <position position="255"/>
    </location>
    <ligand>
        <name>K(+)</name>
        <dbReference type="ChEBI" id="CHEBI:29103"/>
    </ligand>
</feature>
<feature type="sequence conflict" description="In Ref. 1; CAA57664 and 2; BAA08339." evidence="4" ref="1 2">
    <original>GDTTTLVLA</original>
    <variation>WRHDNARSSS</variation>
    <location>
        <begin position="88"/>
        <end position="96"/>
    </location>
</feature>
<feature type="helix" evidence="6">
    <location>
        <begin position="2"/>
        <end position="11"/>
    </location>
</feature>
<feature type="helix" evidence="6">
    <location>
        <begin position="18"/>
        <end position="29"/>
    </location>
</feature>
<feature type="strand" evidence="5">
    <location>
        <begin position="31"/>
        <end position="33"/>
    </location>
</feature>
<feature type="helix" evidence="6">
    <location>
        <begin position="35"/>
        <end position="48"/>
    </location>
</feature>
<feature type="helix" evidence="6">
    <location>
        <begin position="52"/>
        <end position="63"/>
    </location>
</feature>
<feature type="strand" evidence="6">
    <location>
        <begin position="79"/>
        <end position="83"/>
    </location>
</feature>
<feature type="helix" evidence="6">
    <location>
        <begin position="91"/>
        <end position="100"/>
    </location>
</feature>
<feature type="turn" evidence="6">
    <location>
        <begin position="101"/>
        <end position="103"/>
    </location>
</feature>
<feature type="strand" evidence="6">
    <location>
        <begin position="106"/>
        <end position="110"/>
    </location>
</feature>
<feature type="strand" evidence="6">
    <location>
        <begin position="114"/>
        <end position="117"/>
    </location>
</feature>
<feature type="helix" evidence="6">
    <location>
        <begin position="120"/>
        <end position="125"/>
    </location>
</feature>
<feature type="helix" evidence="6">
    <location>
        <begin position="136"/>
        <end position="146"/>
    </location>
</feature>
<feature type="strand" evidence="6">
    <location>
        <begin position="147"/>
        <end position="152"/>
    </location>
</feature>
<feature type="helix" evidence="6">
    <location>
        <begin position="159"/>
        <end position="169"/>
    </location>
</feature>
<feature type="turn" evidence="6">
    <location>
        <begin position="170"/>
        <end position="172"/>
    </location>
</feature>
<feature type="helix" evidence="6">
    <location>
        <begin position="177"/>
        <end position="190"/>
    </location>
</feature>
<feature type="strand" evidence="6">
    <location>
        <begin position="194"/>
        <end position="203"/>
    </location>
</feature>
<feature type="strand" evidence="6">
    <location>
        <begin position="206"/>
        <end position="208"/>
    </location>
</feature>
<feature type="helix" evidence="6">
    <location>
        <begin position="211"/>
        <end position="227"/>
    </location>
</feature>
<feature type="strand" evidence="6">
    <location>
        <begin position="232"/>
        <end position="238"/>
    </location>
</feature>
<feature type="strand" evidence="6">
    <location>
        <begin position="243"/>
        <end position="249"/>
    </location>
</feature>
<feature type="helix" evidence="6">
    <location>
        <begin position="250"/>
        <end position="260"/>
    </location>
</feature>
<feature type="helix" evidence="6">
    <location>
        <begin position="266"/>
        <end position="282"/>
    </location>
</feature>
<feature type="helix" evidence="6">
    <location>
        <begin position="289"/>
        <end position="301"/>
    </location>
</feature>
<feature type="helix" evidence="6">
    <location>
        <begin position="304"/>
        <end position="315"/>
    </location>
</feature>
<feature type="helix" evidence="6">
    <location>
        <begin position="320"/>
        <end position="323"/>
    </location>
</feature>
<feature type="helix" evidence="6">
    <location>
        <begin position="326"/>
        <end position="328"/>
    </location>
</feature>
<feature type="strand" evidence="6">
    <location>
        <begin position="333"/>
        <end position="339"/>
    </location>
</feature>
<feature type="strand" evidence="6">
    <location>
        <begin position="344"/>
        <end position="349"/>
    </location>
</feature>
<feature type="helix" evidence="6">
    <location>
        <begin position="351"/>
        <end position="360"/>
    </location>
</feature>
<feature type="turn" evidence="5">
    <location>
        <begin position="361"/>
        <end position="363"/>
    </location>
</feature>
<feature type="strand" evidence="5">
    <location>
        <begin position="364"/>
        <end position="367"/>
    </location>
</feature>
<feature type="strand" evidence="6">
    <location>
        <begin position="377"/>
        <end position="381"/>
    </location>
</feature>
<feature type="strand" evidence="6">
    <location>
        <begin position="392"/>
        <end position="402"/>
    </location>
</feature>
<feature type="helix" evidence="6">
    <location>
        <begin position="405"/>
        <end position="413"/>
    </location>
</feature>
<feature type="strand" evidence="6">
    <location>
        <begin position="415"/>
        <end position="419"/>
    </location>
</feature>
<feature type="strand" evidence="6">
    <location>
        <begin position="426"/>
        <end position="431"/>
    </location>
</feature>
<organism>
    <name type="scientific">Bacillus subtilis (strain 168)</name>
    <dbReference type="NCBI Taxonomy" id="224308"/>
    <lineage>
        <taxon>Bacteria</taxon>
        <taxon>Bacillati</taxon>
        <taxon>Bacillota</taxon>
        <taxon>Bacilli</taxon>
        <taxon>Bacillales</taxon>
        <taxon>Bacillaceae</taxon>
        <taxon>Bacillus</taxon>
    </lineage>
</organism>
<sequence length="433" mass="46207">MRMVDIIIKKQNGKELTTEEIQFFVNGYTDGSIPDYQASALAMAIFFQDMSDRERADLTMAMVNSGETIDLSAIEGIKVDKHSTGGVGDTTTLVLAPLVAALDVPVAKMSGRGLGHTGGTIDKLEAIMGFHVELTKDEFIKLVNRDKVAVIGQSGNLTPADKKLYALRDVTGTVNSIPLIASSIMSKKIAAGADAIVLDVKTGAGAFMKTEEDAAELAKAMVRIGNNVGRQTMAVISDMSQPLGFAIGNALEVKEAIDTLKGEGPEDLHELVLTLGSQMVVLAKKADTLDEARAKLEEVMKNGKALEKFKDFLKNQGGDSSIVDDPSKLPQAAYQIDVPAKEAGVVSEIVADEIGVAAMLLGAGRATKEDEIDLAVGIMLRKKVGDKVEKGEPLVTLYANRENVDEVIAKVYDNIRIAAEAKAPKLIHTLITE</sequence>